<dbReference type="EMBL" id="AJ249812">
    <property type="protein sequence ID" value="CAC14793.1"/>
    <property type="molecule type" value="Genomic_DNA"/>
</dbReference>
<dbReference type="EMBL" id="AJ249813">
    <property type="protein sequence ID" value="CAC14795.1"/>
    <property type="molecule type" value="Genomic_DNA"/>
</dbReference>
<dbReference type="SMR" id="Q9HDF5"/>
<dbReference type="OrthoDB" id="2384071at2759"/>
<dbReference type="GO" id="GO:0000786">
    <property type="term" value="C:nucleosome"/>
    <property type="evidence" value="ECO:0007669"/>
    <property type="project" value="UniProtKB-KW"/>
</dbReference>
<dbReference type="GO" id="GO:0005634">
    <property type="term" value="C:nucleus"/>
    <property type="evidence" value="ECO:0007669"/>
    <property type="project" value="UniProtKB-SubCell"/>
</dbReference>
<dbReference type="GO" id="GO:0003677">
    <property type="term" value="F:DNA binding"/>
    <property type="evidence" value="ECO:0007669"/>
    <property type="project" value="UniProtKB-KW"/>
</dbReference>
<dbReference type="GO" id="GO:0046982">
    <property type="term" value="F:protein heterodimerization activity"/>
    <property type="evidence" value="ECO:0007669"/>
    <property type="project" value="InterPro"/>
</dbReference>
<dbReference type="GO" id="GO:0030527">
    <property type="term" value="F:structural constituent of chromatin"/>
    <property type="evidence" value="ECO:0007669"/>
    <property type="project" value="InterPro"/>
</dbReference>
<dbReference type="CDD" id="cd22912">
    <property type="entry name" value="HFD_H4"/>
    <property type="match status" value="1"/>
</dbReference>
<dbReference type="FunFam" id="1.10.20.10:FF:000002">
    <property type="entry name" value="Histone H4"/>
    <property type="match status" value="1"/>
</dbReference>
<dbReference type="Gene3D" id="1.10.20.10">
    <property type="entry name" value="Histone, subunit A"/>
    <property type="match status" value="1"/>
</dbReference>
<dbReference type="InterPro" id="IPR035425">
    <property type="entry name" value="CENP-T/H4_C"/>
</dbReference>
<dbReference type="InterPro" id="IPR009072">
    <property type="entry name" value="Histone-fold"/>
</dbReference>
<dbReference type="InterPro" id="IPR001951">
    <property type="entry name" value="Histone_H4"/>
</dbReference>
<dbReference type="InterPro" id="IPR019809">
    <property type="entry name" value="Histone_H4_CS"/>
</dbReference>
<dbReference type="PANTHER" id="PTHR10484">
    <property type="entry name" value="HISTONE H4"/>
    <property type="match status" value="1"/>
</dbReference>
<dbReference type="Pfam" id="PF15511">
    <property type="entry name" value="CENP-T_C"/>
    <property type="match status" value="1"/>
</dbReference>
<dbReference type="PRINTS" id="PR00623">
    <property type="entry name" value="HISTONEH4"/>
</dbReference>
<dbReference type="SMART" id="SM00417">
    <property type="entry name" value="H4"/>
    <property type="match status" value="1"/>
</dbReference>
<dbReference type="SUPFAM" id="SSF47113">
    <property type="entry name" value="Histone-fold"/>
    <property type="match status" value="1"/>
</dbReference>
<dbReference type="PROSITE" id="PS00047">
    <property type="entry name" value="HISTONE_H4"/>
    <property type="match status" value="1"/>
</dbReference>
<feature type="initiator methionine" description="Removed" evidence="1">
    <location>
        <position position="1"/>
    </location>
</feature>
<feature type="chain" id="PRO_0000158328" description="Histone H4">
    <location>
        <begin position="2"/>
        <end position="103"/>
    </location>
</feature>
<feature type="DNA-binding region">
    <location>
        <begin position="17"/>
        <end position="21"/>
    </location>
</feature>
<feature type="modified residue" description="N6-acetyl-N6-methyllysine; alternate" evidence="3">
    <location>
        <position position="6"/>
    </location>
</feature>
<feature type="modified residue" description="N6-methyllysine; alternate" evidence="2">
    <location>
        <position position="6"/>
    </location>
</feature>
<feature type="modified residue" description="N6-methyllysine; alternate" evidence="2">
    <location>
        <position position="9"/>
    </location>
</feature>
<feature type="modified residue" description="N6-acetyl-N6-methyllysine; alternate" evidence="3">
    <location>
        <position position="13"/>
    </location>
</feature>
<feature type="modified residue" description="N6-methyllysine; alternate" evidence="2">
    <location>
        <position position="13"/>
    </location>
</feature>
<feature type="modified residue" description="N6-glutaryllysine" evidence="2">
    <location>
        <position position="92"/>
    </location>
</feature>
<accession>Q9HDF5</accession>
<gene>
    <name type="primary">H4.1</name>
</gene>
<gene>
    <name type="primary">H4.2</name>
</gene>
<keyword id="KW-0007">Acetylation</keyword>
<keyword id="KW-0158">Chromosome</keyword>
<keyword id="KW-0238">DNA-binding</keyword>
<keyword id="KW-0488">Methylation</keyword>
<keyword id="KW-0544">Nucleosome core</keyword>
<keyword id="KW-0539">Nucleus</keyword>
<sequence length="103" mass="11409">MSGRGKGGKGLGKGGAKRHRKILRDNIQGITKPAIRRLARRGGVKRISGLIYEETRSVLKVFLENVIRDAVTYTEHAKRKTVTSLDVVYALKRQGRTLYGFGG</sequence>
<evidence type="ECO:0000250" key="1"/>
<evidence type="ECO:0000250" key="2">
    <source>
        <dbReference type="UniProtKB" id="P02309"/>
    </source>
</evidence>
<evidence type="ECO:0000250" key="3">
    <source>
        <dbReference type="UniProtKB" id="P62805"/>
    </source>
</evidence>
<evidence type="ECO:0000305" key="4"/>
<organism>
    <name type="scientific">Mortierella alpina</name>
    <name type="common">Oleaginous fungus</name>
    <name type="synonym">Mortierella renispora</name>
    <dbReference type="NCBI Taxonomy" id="64518"/>
    <lineage>
        <taxon>Eukaryota</taxon>
        <taxon>Fungi</taxon>
        <taxon>Fungi incertae sedis</taxon>
        <taxon>Mucoromycota</taxon>
        <taxon>Mortierellomycotina</taxon>
        <taxon>Mortierellomycetes</taxon>
        <taxon>Mortierellales</taxon>
        <taxon>Mortierellaceae</taxon>
        <taxon>Mortierella</taxon>
    </lineage>
</organism>
<protein>
    <recommendedName>
        <fullName>Histone H4</fullName>
    </recommendedName>
</protein>
<name>H4_MORAP</name>
<proteinExistence type="inferred from homology"/>
<reference key="1">
    <citation type="journal article" date="2000" name="Appl. Environ. Microbiol.">
        <title>Isolation and use of a homologous histone H4 promoter and a ribosomal DNA region in a transformation vector for the oil-producing fungus Mortierella alpina.</title>
        <authorList>
            <person name="MacKenzie D.A."/>
            <person name="Wongwathanarat P."/>
            <person name="Carter A.T."/>
            <person name="Archer D.B."/>
        </authorList>
    </citation>
    <scope>NUCLEOTIDE SEQUENCE [GENOMIC DNA]</scope>
    <source>
        <strain>ATCC 32222 / CBS 528.72 / M136</strain>
    </source>
</reference>
<comment type="function">
    <text>Core component of nucleosome. Nucleosomes wrap and compact DNA into chromatin, limiting DNA accessibility to the cellular machineries which require DNA as a template. Histones thereby play a central role in transcription regulation, DNA repair, DNA replication and chromosomal stability. DNA accessibility is regulated via a complex set of post-translational modifications of histones, also called histone code, and nucleosome remodeling.</text>
</comment>
<comment type="subunit">
    <text>The nucleosome is a histone octamer containing two molecules each of H2A, H2B, H3 and H4 assembled in one H3-H4 heterotetramer and two H2A-H2B heterodimers. The octamer wraps approximately 147 bp of DNA.</text>
</comment>
<comment type="subcellular location">
    <subcellularLocation>
        <location evidence="1">Nucleus</location>
    </subcellularLocation>
    <subcellularLocation>
        <location evidence="1">Chromosome</location>
    </subcellularLocation>
</comment>
<comment type="PTM">
    <text evidence="2">Glutarylation at Lys-92 (H4K91glu) destabilizes nucleosomes by promoting dissociation of the H2A-H2B dimers from nucleosomes.</text>
</comment>
<comment type="similarity">
    <text evidence="4">Belongs to the histone H4 family.</text>
</comment>